<comment type="catalytic activity">
    <reaction evidence="1">
        <text>(S)-4-amino-5-oxopentanoate = 5-aminolevulinate</text>
        <dbReference type="Rhea" id="RHEA:14265"/>
        <dbReference type="ChEBI" id="CHEBI:57501"/>
        <dbReference type="ChEBI" id="CHEBI:356416"/>
        <dbReference type="EC" id="5.4.3.8"/>
    </reaction>
</comment>
<comment type="cofactor">
    <cofactor evidence="1">
        <name>pyridoxal 5'-phosphate</name>
        <dbReference type="ChEBI" id="CHEBI:597326"/>
    </cofactor>
</comment>
<comment type="pathway">
    <text evidence="1">Porphyrin-containing compound metabolism; protoporphyrin-IX biosynthesis; 5-aminolevulinate from L-glutamyl-tRNA(Glu): step 2/2.</text>
</comment>
<comment type="subunit">
    <text evidence="1">Homodimer.</text>
</comment>
<comment type="subcellular location">
    <subcellularLocation>
        <location evidence="1">Cytoplasm</location>
    </subcellularLocation>
</comment>
<comment type="similarity">
    <text evidence="1">Belongs to the class-III pyridoxal-phosphate-dependent aminotransferase family. HemL subfamily.</text>
</comment>
<accession>B1XD24</accession>
<organism>
    <name type="scientific">Escherichia coli (strain K12 / DH10B)</name>
    <dbReference type="NCBI Taxonomy" id="316385"/>
    <lineage>
        <taxon>Bacteria</taxon>
        <taxon>Pseudomonadati</taxon>
        <taxon>Pseudomonadota</taxon>
        <taxon>Gammaproteobacteria</taxon>
        <taxon>Enterobacterales</taxon>
        <taxon>Enterobacteriaceae</taxon>
        <taxon>Escherichia</taxon>
    </lineage>
</organism>
<feature type="chain" id="PRO_1000121883" description="Glutamate-1-semialdehyde 2,1-aminomutase">
    <location>
        <begin position="1"/>
        <end position="426"/>
    </location>
</feature>
<feature type="modified residue" description="N6-(pyridoxal phosphate)lysine" evidence="1">
    <location>
        <position position="265"/>
    </location>
</feature>
<evidence type="ECO:0000255" key="1">
    <source>
        <dbReference type="HAMAP-Rule" id="MF_00375"/>
    </source>
</evidence>
<keyword id="KW-0963">Cytoplasm</keyword>
<keyword id="KW-0413">Isomerase</keyword>
<keyword id="KW-0627">Porphyrin biosynthesis</keyword>
<keyword id="KW-0663">Pyridoxal phosphate</keyword>
<sequence length="426" mass="45366">MSKSENLYSAARELIPGGVNSPVRAFTGVGGTPLFIEKADGAYLYDVDGKAYIDYVGSWGPMVLGHNHPAIRNAVIEAAERGLSFGAPTEMEVKMAQLVTELVPTMDMVRMVNSGTEATMSAIRLARGFTGRDKIIKFEGCYHGHADCLLVKAGSGALTLGQPNSPGVPADFAKYTLTCTYNDLASVRAAFEQYPQEIACIIVEPVAGNMNCVPPLPEFLPGLRALCDEFGALLIIDEVMTGFRVALAGAQDYYGVVPDLTCLGKIIGGGMPVGAFGGRRDVMDALAPTGPVYQAGTLSGNPIAMAAGFACLNEVAQPGVHETLDELTTRLAEGLLEAAEEAGIPLVVNHVGGMFGIFFTDAESVTCYQDVMACDVERFKRFFHMMLDEGVYLAPSAFEAGFMSVAHSMEDINNTIDAARRVFAKL</sequence>
<name>GSA_ECODH</name>
<gene>
    <name evidence="1" type="primary">hemL</name>
    <name type="ordered locus">ECDH10B_0134</name>
</gene>
<proteinExistence type="inferred from homology"/>
<protein>
    <recommendedName>
        <fullName evidence="1">Glutamate-1-semialdehyde 2,1-aminomutase</fullName>
        <shortName evidence="1">GSA</shortName>
        <ecNumber evidence="1">5.4.3.8</ecNumber>
    </recommendedName>
    <alternativeName>
        <fullName evidence="1">Glutamate-1-semialdehyde aminotransferase</fullName>
        <shortName evidence="1">GSA-AT</shortName>
    </alternativeName>
</protein>
<reference key="1">
    <citation type="journal article" date="2008" name="J. Bacteriol.">
        <title>The complete genome sequence of Escherichia coli DH10B: insights into the biology of a laboratory workhorse.</title>
        <authorList>
            <person name="Durfee T."/>
            <person name="Nelson R."/>
            <person name="Baldwin S."/>
            <person name="Plunkett G. III"/>
            <person name="Burland V."/>
            <person name="Mau B."/>
            <person name="Petrosino J.F."/>
            <person name="Qin X."/>
            <person name="Muzny D.M."/>
            <person name="Ayele M."/>
            <person name="Gibbs R.A."/>
            <person name="Csorgo B."/>
            <person name="Posfai G."/>
            <person name="Weinstock G.M."/>
            <person name="Blattner F.R."/>
        </authorList>
    </citation>
    <scope>NUCLEOTIDE SEQUENCE [LARGE SCALE GENOMIC DNA]</scope>
    <source>
        <strain>K12 / DH10B</strain>
    </source>
</reference>
<dbReference type="EC" id="5.4.3.8" evidence="1"/>
<dbReference type="EMBL" id="CP000948">
    <property type="protein sequence ID" value="ACB01333.1"/>
    <property type="molecule type" value="Genomic_DNA"/>
</dbReference>
<dbReference type="RefSeq" id="WP_000045315.1">
    <property type="nucleotide sequence ID" value="NC_010473.1"/>
</dbReference>
<dbReference type="SMR" id="B1XD24"/>
<dbReference type="KEGG" id="ecd:ECDH10B_0134"/>
<dbReference type="HOGENOM" id="CLU_016922_1_5_6"/>
<dbReference type="UniPathway" id="UPA00251">
    <property type="reaction ID" value="UER00317"/>
</dbReference>
<dbReference type="GO" id="GO:0005737">
    <property type="term" value="C:cytoplasm"/>
    <property type="evidence" value="ECO:0007669"/>
    <property type="project" value="UniProtKB-SubCell"/>
</dbReference>
<dbReference type="GO" id="GO:0042286">
    <property type="term" value="F:glutamate-1-semialdehyde 2,1-aminomutase activity"/>
    <property type="evidence" value="ECO:0007669"/>
    <property type="project" value="UniProtKB-UniRule"/>
</dbReference>
<dbReference type="GO" id="GO:0030170">
    <property type="term" value="F:pyridoxal phosphate binding"/>
    <property type="evidence" value="ECO:0007669"/>
    <property type="project" value="InterPro"/>
</dbReference>
<dbReference type="GO" id="GO:0008483">
    <property type="term" value="F:transaminase activity"/>
    <property type="evidence" value="ECO:0007669"/>
    <property type="project" value="InterPro"/>
</dbReference>
<dbReference type="GO" id="GO:0006782">
    <property type="term" value="P:protoporphyrinogen IX biosynthetic process"/>
    <property type="evidence" value="ECO:0007669"/>
    <property type="project" value="UniProtKB-UniRule"/>
</dbReference>
<dbReference type="CDD" id="cd00610">
    <property type="entry name" value="OAT_like"/>
    <property type="match status" value="1"/>
</dbReference>
<dbReference type="FunFam" id="3.40.640.10:FF:000021">
    <property type="entry name" value="Glutamate-1-semialdehyde 2,1-aminomutase"/>
    <property type="match status" value="1"/>
</dbReference>
<dbReference type="FunFam" id="3.90.1150.10:FF:000012">
    <property type="entry name" value="Glutamate-1-semialdehyde 2,1-aminomutase"/>
    <property type="match status" value="1"/>
</dbReference>
<dbReference type="Gene3D" id="3.90.1150.10">
    <property type="entry name" value="Aspartate Aminotransferase, domain 1"/>
    <property type="match status" value="1"/>
</dbReference>
<dbReference type="Gene3D" id="3.40.640.10">
    <property type="entry name" value="Type I PLP-dependent aspartate aminotransferase-like (Major domain)"/>
    <property type="match status" value="1"/>
</dbReference>
<dbReference type="HAMAP" id="MF_00375">
    <property type="entry name" value="HemL_aminotrans_3"/>
    <property type="match status" value="1"/>
</dbReference>
<dbReference type="InterPro" id="IPR004639">
    <property type="entry name" value="4pyrrol_synth_GluAld_NH2Trfase"/>
</dbReference>
<dbReference type="InterPro" id="IPR005814">
    <property type="entry name" value="Aminotrans_3"/>
</dbReference>
<dbReference type="InterPro" id="IPR049704">
    <property type="entry name" value="Aminotrans_3_PPA_site"/>
</dbReference>
<dbReference type="InterPro" id="IPR015424">
    <property type="entry name" value="PyrdxlP-dep_Trfase"/>
</dbReference>
<dbReference type="InterPro" id="IPR015421">
    <property type="entry name" value="PyrdxlP-dep_Trfase_major"/>
</dbReference>
<dbReference type="InterPro" id="IPR015422">
    <property type="entry name" value="PyrdxlP-dep_Trfase_small"/>
</dbReference>
<dbReference type="NCBIfam" id="TIGR00713">
    <property type="entry name" value="hemL"/>
    <property type="match status" value="1"/>
</dbReference>
<dbReference type="NCBIfam" id="NF000818">
    <property type="entry name" value="PRK00062.1"/>
    <property type="match status" value="1"/>
</dbReference>
<dbReference type="PANTHER" id="PTHR43713">
    <property type="entry name" value="GLUTAMATE-1-SEMIALDEHYDE 2,1-AMINOMUTASE"/>
    <property type="match status" value="1"/>
</dbReference>
<dbReference type="PANTHER" id="PTHR43713:SF3">
    <property type="entry name" value="GLUTAMATE-1-SEMIALDEHYDE 2,1-AMINOMUTASE 1, CHLOROPLASTIC-RELATED"/>
    <property type="match status" value="1"/>
</dbReference>
<dbReference type="Pfam" id="PF00202">
    <property type="entry name" value="Aminotran_3"/>
    <property type="match status" value="1"/>
</dbReference>
<dbReference type="SUPFAM" id="SSF53383">
    <property type="entry name" value="PLP-dependent transferases"/>
    <property type="match status" value="1"/>
</dbReference>
<dbReference type="PROSITE" id="PS00600">
    <property type="entry name" value="AA_TRANSFER_CLASS_3"/>
    <property type="match status" value="1"/>
</dbReference>